<organism>
    <name type="scientific">Cereibacter sphaeroides (strain ATCC 17029 / ATH 2.4.9)</name>
    <name type="common">Rhodobacter sphaeroides</name>
    <dbReference type="NCBI Taxonomy" id="349101"/>
    <lineage>
        <taxon>Bacteria</taxon>
        <taxon>Pseudomonadati</taxon>
        <taxon>Pseudomonadota</taxon>
        <taxon>Alphaproteobacteria</taxon>
        <taxon>Rhodobacterales</taxon>
        <taxon>Paracoccaceae</taxon>
        <taxon>Cereibacter</taxon>
    </lineage>
</organism>
<evidence type="ECO:0000255" key="1">
    <source>
        <dbReference type="HAMAP-Rule" id="MF_00500"/>
    </source>
</evidence>
<evidence type="ECO:0000256" key="2">
    <source>
        <dbReference type="SAM" id="MobiDB-lite"/>
    </source>
</evidence>
<evidence type="ECO:0000305" key="3"/>
<protein>
    <recommendedName>
        <fullName evidence="1">Small ribosomal subunit protein bS20</fullName>
    </recommendedName>
    <alternativeName>
        <fullName evidence="3">30S ribosomal protein S20</fullName>
    </alternativeName>
</protein>
<comment type="function">
    <text evidence="1">Binds directly to 16S ribosomal RNA.</text>
</comment>
<comment type="similarity">
    <text evidence="1">Belongs to the bacterial ribosomal protein bS20 family.</text>
</comment>
<reference key="1">
    <citation type="submission" date="2007-02" db="EMBL/GenBank/DDBJ databases">
        <title>Complete sequence of chromosome 1 of Rhodobacter sphaeroides ATCC 17029.</title>
        <authorList>
            <person name="Copeland A."/>
            <person name="Lucas S."/>
            <person name="Lapidus A."/>
            <person name="Barry K."/>
            <person name="Detter J.C."/>
            <person name="Glavina del Rio T."/>
            <person name="Hammon N."/>
            <person name="Israni S."/>
            <person name="Dalin E."/>
            <person name="Tice H."/>
            <person name="Pitluck S."/>
            <person name="Kiss H."/>
            <person name="Brettin T."/>
            <person name="Bruce D."/>
            <person name="Han C."/>
            <person name="Tapia R."/>
            <person name="Gilna P."/>
            <person name="Schmutz J."/>
            <person name="Larimer F."/>
            <person name="Land M."/>
            <person name="Hauser L."/>
            <person name="Kyrpides N."/>
            <person name="Mikhailova N."/>
            <person name="Richardson P."/>
            <person name="Mackenzie C."/>
            <person name="Choudhary M."/>
            <person name="Donohue T.J."/>
            <person name="Kaplan S."/>
        </authorList>
    </citation>
    <scope>NUCLEOTIDE SEQUENCE [LARGE SCALE GENOMIC DNA]</scope>
    <source>
        <strain>ATCC 17029 / ATH 2.4.9</strain>
    </source>
</reference>
<sequence>MANSPQSKKRARQAEARAAVNKARRSRIRTFLRKVEEAIATGDASVAAAALKTAQPELARGVTKGVLHKNTVARKMSRLAHRVKVLSQPAAA</sequence>
<gene>
    <name evidence="1" type="primary">rpsT</name>
    <name type="ordered locus">Rsph17029_0010</name>
</gene>
<accession>A3PFL4</accession>
<dbReference type="EMBL" id="CP000577">
    <property type="protein sequence ID" value="ABN75130.1"/>
    <property type="molecule type" value="Genomic_DNA"/>
</dbReference>
<dbReference type="RefSeq" id="WP_002721915.1">
    <property type="nucleotide sequence ID" value="NC_009049.1"/>
</dbReference>
<dbReference type="SMR" id="A3PFL4"/>
<dbReference type="GeneID" id="67448112"/>
<dbReference type="KEGG" id="rsh:Rsph17029_0010"/>
<dbReference type="HOGENOM" id="CLU_160655_3_0_5"/>
<dbReference type="GO" id="GO:0015935">
    <property type="term" value="C:small ribosomal subunit"/>
    <property type="evidence" value="ECO:0007669"/>
    <property type="project" value="TreeGrafter"/>
</dbReference>
<dbReference type="GO" id="GO:0070181">
    <property type="term" value="F:small ribosomal subunit rRNA binding"/>
    <property type="evidence" value="ECO:0007669"/>
    <property type="project" value="TreeGrafter"/>
</dbReference>
<dbReference type="GO" id="GO:0003735">
    <property type="term" value="F:structural constituent of ribosome"/>
    <property type="evidence" value="ECO:0007669"/>
    <property type="project" value="InterPro"/>
</dbReference>
<dbReference type="GO" id="GO:0006412">
    <property type="term" value="P:translation"/>
    <property type="evidence" value="ECO:0007669"/>
    <property type="project" value="UniProtKB-UniRule"/>
</dbReference>
<dbReference type="FunFam" id="1.20.58.110:FF:000001">
    <property type="entry name" value="30S ribosomal protein S20"/>
    <property type="match status" value="1"/>
</dbReference>
<dbReference type="Gene3D" id="1.20.58.110">
    <property type="entry name" value="Ribosomal protein S20"/>
    <property type="match status" value="1"/>
</dbReference>
<dbReference type="HAMAP" id="MF_00500">
    <property type="entry name" value="Ribosomal_bS20"/>
    <property type="match status" value="1"/>
</dbReference>
<dbReference type="InterPro" id="IPR002583">
    <property type="entry name" value="Ribosomal_bS20"/>
</dbReference>
<dbReference type="InterPro" id="IPR036510">
    <property type="entry name" value="Ribosomal_bS20_sf"/>
</dbReference>
<dbReference type="NCBIfam" id="TIGR00029">
    <property type="entry name" value="S20"/>
    <property type="match status" value="1"/>
</dbReference>
<dbReference type="PANTHER" id="PTHR33398">
    <property type="entry name" value="30S RIBOSOMAL PROTEIN S20"/>
    <property type="match status" value="1"/>
</dbReference>
<dbReference type="PANTHER" id="PTHR33398:SF1">
    <property type="entry name" value="SMALL RIBOSOMAL SUBUNIT PROTEIN BS20C"/>
    <property type="match status" value="1"/>
</dbReference>
<dbReference type="Pfam" id="PF01649">
    <property type="entry name" value="Ribosomal_S20p"/>
    <property type="match status" value="1"/>
</dbReference>
<dbReference type="SUPFAM" id="SSF46992">
    <property type="entry name" value="Ribosomal protein S20"/>
    <property type="match status" value="1"/>
</dbReference>
<keyword id="KW-0687">Ribonucleoprotein</keyword>
<keyword id="KW-0689">Ribosomal protein</keyword>
<keyword id="KW-0694">RNA-binding</keyword>
<keyword id="KW-0699">rRNA-binding</keyword>
<name>RS20_CERS1</name>
<feature type="chain" id="PRO_1000014639" description="Small ribosomal subunit protein bS20">
    <location>
        <begin position="1"/>
        <end position="92"/>
    </location>
</feature>
<feature type="region of interest" description="Disordered" evidence="2">
    <location>
        <begin position="1"/>
        <end position="22"/>
    </location>
</feature>
<proteinExistence type="inferred from homology"/>